<gene>
    <name evidence="2" type="primary">get3</name>
    <name evidence="2" type="synonym">asna1</name>
    <name type="ORF">si:dkey-121b10.2</name>
    <name type="ORF">zgc:86799</name>
</gene>
<reference key="1">
    <citation type="submission" date="2004-06" db="EMBL/GenBank/DDBJ databases">
        <authorList>
            <consortium name="NIH - Zebrafish Gene Collection (ZGC) project"/>
        </authorList>
    </citation>
    <scope>NUCLEOTIDE SEQUENCE [LARGE SCALE MRNA]</scope>
    <source>
        <tissue>Embryo</tissue>
    </source>
</reference>
<reference key="2">
    <citation type="journal article" date="2013" name="Nature">
        <title>The zebrafish reference genome sequence and its relationship to the human genome.</title>
        <authorList>
            <person name="Howe K."/>
            <person name="Clark M.D."/>
            <person name="Torroja C.F."/>
            <person name="Torrance J."/>
            <person name="Berthelot C."/>
            <person name="Muffato M."/>
            <person name="Collins J.E."/>
            <person name="Humphray S."/>
            <person name="McLaren K."/>
            <person name="Matthews L."/>
            <person name="McLaren S."/>
            <person name="Sealy I."/>
            <person name="Caccamo M."/>
            <person name="Churcher C."/>
            <person name="Scott C."/>
            <person name="Barrett J.C."/>
            <person name="Koch R."/>
            <person name="Rauch G.J."/>
            <person name="White S."/>
            <person name="Chow W."/>
            <person name="Kilian B."/>
            <person name="Quintais L.T."/>
            <person name="Guerra-Assuncao J.A."/>
            <person name="Zhou Y."/>
            <person name="Gu Y."/>
            <person name="Yen J."/>
            <person name="Vogel J.H."/>
            <person name="Eyre T."/>
            <person name="Redmond S."/>
            <person name="Banerjee R."/>
            <person name="Chi J."/>
            <person name="Fu B."/>
            <person name="Langley E."/>
            <person name="Maguire S.F."/>
            <person name="Laird G.K."/>
            <person name="Lloyd D."/>
            <person name="Kenyon E."/>
            <person name="Donaldson S."/>
            <person name="Sehra H."/>
            <person name="Almeida-King J."/>
            <person name="Loveland J."/>
            <person name="Trevanion S."/>
            <person name="Jones M."/>
            <person name="Quail M."/>
            <person name="Willey D."/>
            <person name="Hunt A."/>
            <person name="Burton J."/>
            <person name="Sims S."/>
            <person name="McLay K."/>
            <person name="Plumb B."/>
            <person name="Davis J."/>
            <person name="Clee C."/>
            <person name="Oliver K."/>
            <person name="Clark R."/>
            <person name="Riddle C."/>
            <person name="Elliot D."/>
            <person name="Threadgold G."/>
            <person name="Harden G."/>
            <person name="Ware D."/>
            <person name="Begum S."/>
            <person name="Mortimore B."/>
            <person name="Kerry G."/>
            <person name="Heath P."/>
            <person name="Phillimore B."/>
            <person name="Tracey A."/>
            <person name="Corby N."/>
            <person name="Dunn M."/>
            <person name="Johnson C."/>
            <person name="Wood J."/>
            <person name="Clark S."/>
            <person name="Pelan S."/>
            <person name="Griffiths G."/>
            <person name="Smith M."/>
            <person name="Glithero R."/>
            <person name="Howden P."/>
            <person name="Barker N."/>
            <person name="Lloyd C."/>
            <person name="Stevens C."/>
            <person name="Harley J."/>
            <person name="Holt K."/>
            <person name="Panagiotidis G."/>
            <person name="Lovell J."/>
            <person name="Beasley H."/>
            <person name="Henderson C."/>
            <person name="Gordon D."/>
            <person name="Auger K."/>
            <person name="Wright D."/>
            <person name="Collins J."/>
            <person name="Raisen C."/>
            <person name="Dyer L."/>
            <person name="Leung K."/>
            <person name="Robertson L."/>
            <person name="Ambridge K."/>
            <person name="Leongamornlert D."/>
            <person name="McGuire S."/>
            <person name="Gilderthorp R."/>
            <person name="Griffiths C."/>
            <person name="Manthravadi D."/>
            <person name="Nichol S."/>
            <person name="Barker G."/>
            <person name="Whitehead S."/>
            <person name="Kay M."/>
            <person name="Brown J."/>
            <person name="Murnane C."/>
            <person name="Gray E."/>
            <person name="Humphries M."/>
            <person name="Sycamore N."/>
            <person name="Barker D."/>
            <person name="Saunders D."/>
            <person name="Wallis J."/>
            <person name="Babbage A."/>
            <person name="Hammond S."/>
            <person name="Mashreghi-Mohammadi M."/>
            <person name="Barr L."/>
            <person name="Martin S."/>
            <person name="Wray P."/>
            <person name="Ellington A."/>
            <person name="Matthews N."/>
            <person name="Ellwood M."/>
            <person name="Woodmansey R."/>
            <person name="Clark G."/>
            <person name="Cooper J."/>
            <person name="Tromans A."/>
            <person name="Grafham D."/>
            <person name="Skuce C."/>
            <person name="Pandian R."/>
            <person name="Andrews R."/>
            <person name="Harrison E."/>
            <person name="Kimberley A."/>
            <person name="Garnett J."/>
            <person name="Fosker N."/>
            <person name="Hall R."/>
            <person name="Garner P."/>
            <person name="Kelly D."/>
            <person name="Bird C."/>
            <person name="Palmer S."/>
            <person name="Gehring I."/>
            <person name="Berger A."/>
            <person name="Dooley C.M."/>
            <person name="Ersan-Urun Z."/>
            <person name="Eser C."/>
            <person name="Geiger H."/>
            <person name="Geisler M."/>
            <person name="Karotki L."/>
            <person name="Kirn A."/>
            <person name="Konantz J."/>
            <person name="Konantz M."/>
            <person name="Oberlander M."/>
            <person name="Rudolph-Geiger S."/>
            <person name="Teucke M."/>
            <person name="Lanz C."/>
            <person name="Raddatz G."/>
            <person name="Osoegawa K."/>
            <person name="Zhu B."/>
            <person name="Rapp A."/>
            <person name="Widaa S."/>
            <person name="Langford C."/>
            <person name="Yang F."/>
            <person name="Schuster S.C."/>
            <person name="Carter N.P."/>
            <person name="Harrow J."/>
            <person name="Ning Z."/>
            <person name="Herrero J."/>
            <person name="Searle S.M."/>
            <person name="Enright A."/>
            <person name="Geisler R."/>
            <person name="Plasterk R.H."/>
            <person name="Lee C."/>
            <person name="Westerfield M."/>
            <person name="de Jong P.J."/>
            <person name="Zon L.I."/>
            <person name="Postlethwait J.H."/>
            <person name="Nusslein-Volhard C."/>
            <person name="Hubbard T.J."/>
            <person name="Roest Crollius H."/>
            <person name="Rogers J."/>
            <person name="Stemple D.L."/>
        </authorList>
    </citation>
    <scope>NUCLEOTIDE SEQUENCE [LARGE SCALE GENOMIC DNA]</scope>
    <source>
        <strain>Tuebingen</strain>
    </source>
</reference>
<reference key="3">
    <citation type="journal article" date="2008" name="J. Proteome Res.">
        <title>Online automated in vivo zebrafish phosphoproteomics: from large-scale analysis down to a single embryo.</title>
        <authorList>
            <person name="Lemeer S."/>
            <person name="Pinkse M.W.H."/>
            <person name="Mohammed S."/>
            <person name="van Breukelen B."/>
            <person name="den Hertog J."/>
            <person name="Slijper M."/>
            <person name="Heck A.J.R."/>
        </authorList>
    </citation>
    <scope>PHOSPHORYLATION [LARGE SCALE ANALYSIS] AT SER-4</scope>
    <scope>IDENTIFICATION BY MASS SPECTROMETRY</scope>
    <source>
        <tissue>Embryo</tissue>
    </source>
</reference>
<reference key="4">
    <citation type="journal article" date="2019" name="Circ. Genom. Precis. Med.">
        <title>Biallelic variants in ASNA1, encoding a cytosolic targeting factor of tail-anchored proteins, cause rapidly progressive pediatric cardiomyopathy.</title>
        <authorList>
            <person name="Verhagen J.M.A."/>
            <person name="van den Born M."/>
            <person name="van der Linde H.C."/>
            <person name="Nikkels P.G.J."/>
            <person name="Verdijk R.M."/>
            <person name="Kivlen M.H."/>
            <person name="van Unen L.M.A."/>
            <person name="Baas A.F."/>
            <person name="Ter Heide H."/>
            <person name="van Osch-Gevers L."/>
            <person name="Hoogeveen-Westerveld M."/>
            <person name="Herkert J.C."/>
            <person name="Bertoli-Avella A.M."/>
            <person name="van Slegtenhorst M.A."/>
            <person name="Wessels M.W."/>
            <person name="Verheijen F.W."/>
            <person name="Hassel D."/>
            <person name="Hofstra R.M.W."/>
            <person name="Hegde R.S."/>
            <person name="van Hasselt P.M."/>
            <person name="van Ham T.J."/>
            <person name="van de Laar I.M.B.H."/>
        </authorList>
    </citation>
    <scope>DISRUPTION PHENOTYPE</scope>
</reference>
<reference evidence="6 7 8" key="5">
    <citation type="journal article" date="2021" name="Nat. Struct. Mol. Biol.">
        <title>Structural insights into metazoan pretargeting GET complexes.</title>
        <authorList>
            <person name="Keszei A.F.A."/>
            <person name="Yip M.C.J."/>
            <person name="Hsieh T.C."/>
            <person name="Shao S."/>
        </authorList>
    </citation>
    <scope>STRUCTURE BY ELECTRON MICROSCOPY (3.30 ANGSTROMS) OF MUTANT ASN-68 IN COMPLEX WITH BAG6 COMPLEX AND ATP</scope>
    <scope>INTERACTION WITH GET4</scope>
    <scope>MUTAGENESIS OF ASP-68 AND GLU-114</scope>
</reference>
<protein>
    <recommendedName>
        <fullName evidence="2">ATPase GET3</fullName>
        <ecNumber evidence="1">3.6.4.-</ecNumber>
    </recommendedName>
    <alternativeName>
        <fullName evidence="2">Arsenical pump-driving ATPase</fullName>
    </alternativeName>
    <alternativeName>
        <fullName evidence="2">Arsenite-stimulated ATPase</fullName>
    </alternativeName>
    <alternativeName>
        <fullName evidence="2">Guided entry of tail-anchored proteins factor 3, ATPase</fullName>
    </alternativeName>
</protein>
<organism>
    <name type="scientific">Danio rerio</name>
    <name type="common">Zebrafish</name>
    <name type="synonym">Brachydanio rerio</name>
    <dbReference type="NCBI Taxonomy" id="7955"/>
    <lineage>
        <taxon>Eukaryota</taxon>
        <taxon>Metazoa</taxon>
        <taxon>Chordata</taxon>
        <taxon>Craniata</taxon>
        <taxon>Vertebrata</taxon>
        <taxon>Euteleostomi</taxon>
        <taxon>Actinopterygii</taxon>
        <taxon>Neopterygii</taxon>
        <taxon>Teleostei</taxon>
        <taxon>Ostariophysi</taxon>
        <taxon>Cypriniformes</taxon>
        <taxon>Danionidae</taxon>
        <taxon>Danioninae</taxon>
        <taxon>Danio</taxon>
    </lineage>
</organism>
<name>GET3_DANRE</name>
<keyword id="KW-0002">3D-structure</keyword>
<keyword id="KW-0067">ATP-binding</keyword>
<keyword id="KW-0963">Cytoplasm</keyword>
<keyword id="KW-0256">Endoplasmic reticulum</keyword>
<keyword id="KW-0378">Hydrolase</keyword>
<keyword id="KW-0479">Metal-binding</keyword>
<keyword id="KW-0547">Nucleotide-binding</keyword>
<keyword id="KW-0539">Nucleus</keyword>
<keyword id="KW-0597">Phosphoprotein</keyword>
<keyword id="KW-1185">Reference proteome</keyword>
<keyword id="KW-0813">Transport</keyword>
<keyword id="KW-0862">Zinc</keyword>
<feature type="chain" id="PRO_0000348230" description="ATPase GET3">
    <location>
        <begin position="1"/>
        <end position="341"/>
    </location>
</feature>
<feature type="active site" evidence="2">
    <location>
        <position position="68"/>
    </location>
</feature>
<feature type="binding site" evidence="2 5 6 7 8">
    <location>
        <position position="39"/>
    </location>
    <ligand>
        <name>ATP</name>
        <dbReference type="ChEBI" id="CHEBI:30616"/>
        <note>ligand shared between dimeric partners</note>
    </ligand>
</feature>
<feature type="binding site" evidence="2 5 6 7 8">
    <location>
        <position position="40"/>
    </location>
    <ligand>
        <name>ATP</name>
        <dbReference type="ChEBI" id="CHEBI:30616"/>
        <note>ligand shared between dimeric partners</note>
    </ligand>
</feature>
<feature type="binding site" evidence="2 5 6 7 8">
    <location>
        <position position="43"/>
    </location>
    <ligand>
        <name>ATP</name>
        <dbReference type="ChEBI" id="CHEBI:30616"/>
        <note>ligand shared between dimeric partners</note>
    </ligand>
</feature>
<feature type="binding site" evidence="2 5 6 7 8">
    <location>
        <position position="44"/>
    </location>
    <ligand>
        <name>ATP</name>
        <dbReference type="ChEBI" id="CHEBI:30616"/>
        <note>ligand shared between dimeric partners</note>
    </ligand>
</feature>
<feature type="binding site" evidence="2 5 6 7 8">
    <location>
        <position position="45"/>
    </location>
    <ligand>
        <name>ATP</name>
        <dbReference type="ChEBI" id="CHEBI:30616"/>
        <note>ligand shared between dimeric partners</note>
    </ligand>
</feature>
<feature type="binding site" evidence="2 5 6 7 8">
    <location>
        <position position="46"/>
    </location>
    <ligand>
        <name>ATP</name>
        <dbReference type="ChEBI" id="CHEBI:30616"/>
        <note>ligand shared between dimeric partners</note>
    </ligand>
</feature>
<feature type="binding site" evidence="2 5 6 7 8">
    <location>
        <position position="245"/>
    </location>
    <ligand>
        <name>ATP</name>
        <dbReference type="ChEBI" id="CHEBI:30616"/>
        <note>ligand shared between dimeric partners</note>
    </ligand>
</feature>
<feature type="binding site" evidence="2 5 6 7 8">
    <location>
        <position position="272"/>
    </location>
    <ligand>
        <name>ATP</name>
        <dbReference type="ChEBI" id="CHEBI:30616"/>
        <note>ligand shared between dimeric partners</note>
    </ligand>
</feature>
<feature type="binding site" evidence="2 5 6 7 8">
    <location>
        <position position="283"/>
    </location>
    <ligand>
        <name>Zn(2+)</name>
        <dbReference type="ChEBI" id="CHEBI:29105"/>
        <note>ligand shared between dimeric partners</note>
    </ligand>
</feature>
<feature type="binding site" evidence="2 5 6 7 8">
    <location>
        <position position="286"/>
    </location>
    <ligand>
        <name>Zn(2+)</name>
        <dbReference type="ChEBI" id="CHEBI:29105"/>
        <note>ligand shared between dimeric partners</note>
    </ligand>
</feature>
<feature type="binding site" evidence="5 6 7 8">
    <location>
        <position position="313"/>
    </location>
    <ligand>
        <name>ATP</name>
        <dbReference type="ChEBI" id="CHEBI:30616"/>
        <note>ligand shared between dimeric partners</note>
    </ligand>
</feature>
<feature type="binding site" evidence="5 6 7 8">
    <location>
        <position position="315"/>
    </location>
    <ligand>
        <name>ATP</name>
        <dbReference type="ChEBI" id="CHEBI:30616"/>
        <note>ligand shared between dimeric partners</note>
    </ligand>
</feature>
<feature type="modified residue" description="Phosphoserine" evidence="3">
    <location>
        <position position="4"/>
    </location>
</feature>
<feature type="mutagenesis site" description="No effect on interaction with GET4. Reduces tail-anchored protein delivery." evidence="5">
    <original>D</original>
    <variation>N</variation>
    <location>
        <position position="68"/>
    </location>
</feature>
<feature type="mutagenesis site" description="No effect on interaction with GET4. No effect on tail-anchored protein delivery." evidence="5">
    <original>E</original>
    <variation>P</variation>
    <location>
        <position position="114"/>
    </location>
</feature>
<feature type="helix" evidence="9">
    <location>
        <begin position="23"/>
        <end position="27"/>
    </location>
</feature>
<feature type="strand" evidence="9">
    <location>
        <begin position="33"/>
        <end position="37"/>
    </location>
</feature>
<feature type="helix" evidence="9">
    <location>
        <begin position="44"/>
        <end position="56"/>
    </location>
</feature>
<feature type="strand" evidence="9">
    <location>
        <begin position="62"/>
        <end position="66"/>
    </location>
</feature>
<feature type="strand" evidence="9">
    <location>
        <begin position="68"/>
        <end position="70"/>
    </location>
</feature>
<feature type="helix" evidence="9">
    <location>
        <begin position="73"/>
        <end position="77"/>
    </location>
</feature>
<feature type="strand" evidence="9">
    <location>
        <begin position="92"/>
        <end position="98"/>
    </location>
</feature>
<feature type="helix" evidence="9">
    <location>
        <begin position="117"/>
        <end position="132"/>
    </location>
</feature>
<feature type="helix" evidence="9">
    <location>
        <begin position="136"/>
        <end position="151"/>
    </location>
</feature>
<feature type="strand" evidence="9">
    <location>
        <begin position="154"/>
        <end position="160"/>
    </location>
</feature>
<feature type="helix" evidence="9">
    <location>
        <begin position="164"/>
        <end position="186"/>
    </location>
</feature>
<feature type="turn" evidence="9">
    <location>
        <begin position="187"/>
        <end position="189"/>
    </location>
</feature>
<feature type="helix" evidence="9">
    <location>
        <begin position="210"/>
        <end position="230"/>
    </location>
</feature>
<feature type="turn" evidence="9">
    <location>
        <begin position="233"/>
        <end position="235"/>
    </location>
</feature>
<feature type="strand" evidence="9">
    <location>
        <begin position="236"/>
        <end position="245"/>
    </location>
</feature>
<feature type="helix" evidence="9">
    <location>
        <begin position="246"/>
        <end position="262"/>
    </location>
</feature>
<feature type="strand" evidence="9">
    <location>
        <begin position="268"/>
        <end position="274"/>
    </location>
</feature>
<feature type="helix" evidence="9">
    <location>
        <begin position="284"/>
        <end position="303"/>
    </location>
</feature>
<feature type="turn" evidence="10">
    <location>
        <begin position="304"/>
        <end position="306"/>
    </location>
</feature>
<feature type="strand" evidence="9">
    <location>
        <begin position="307"/>
        <end position="313"/>
    </location>
</feature>
<feature type="helix" evidence="9">
    <location>
        <begin position="322"/>
        <end position="333"/>
    </location>
</feature>
<proteinExistence type="evidence at protein level"/>
<evidence type="ECO:0000250" key="1">
    <source>
        <dbReference type="UniProtKB" id="O43681"/>
    </source>
</evidence>
<evidence type="ECO:0000255" key="2">
    <source>
        <dbReference type="HAMAP-Rule" id="MF_03112"/>
    </source>
</evidence>
<evidence type="ECO:0000269" key="3">
    <source>
    </source>
</evidence>
<evidence type="ECO:0000269" key="4">
    <source>
    </source>
</evidence>
<evidence type="ECO:0000269" key="5">
    <source>
    </source>
</evidence>
<evidence type="ECO:0007744" key="6">
    <source>
        <dbReference type="PDB" id="7RU9"/>
    </source>
</evidence>
<evidence type="ECO:0007744" key="7">
    <source>
        <dbReference type="PDB" id="7RUA"/>
    </source>
</evidence>
<evidence type="ECO:0007744" key="8">
    <source>
        <dbReference type="PDB" id="7RUC"/>
    </source>
</evidence>
<evidence type="ECO:0007829" key="9">
    <source>
        <dbReference type="PDB" id="7RU9"/>
    </source>
</evidence>
<evidence type="ECO:0007829" key="10">
    <source>
        <dbReference type="PDB" id="7RUA"/>
    </source>
</evidence>
<sequence>MAASVEDEFEDAPDVEPLEPTLKNIIEQKSLKWIFVGGKGGVGKTTCSCSLAVQLAAVRESVLIISTDPAHNISDAFDQKFSKVPTKVKGYDNLFAMEIDPSLGVAELPDEFFEEDNMLSMGKKMMQEAMSAFPGIDEAMSYAEVMRLVKGMNFSVVVFDTAPTGHTLRLLNFPTIVERGLGRLMQIKNQISPFISQMCNMLGLGDMNADQLASKLEETLPVIRSVSEQFKDPEQTTFICVCIAEFLSLYETERLIQELAKCRIDTHNIIVNQLVFPDNERPCKMCEARHKIQSKYLDQMEDLYEDFHIVKLPLLPHEVRGADKVNTFSKQLLEPYSPPKK</sequence>
<comment type="function">
    <text evidence="1 2">ATPase required for the post-translational delivery of tail-anchored (TA) proteins to the endoplasmic reticulum. Recognizes and selectively binds the transmembrane domain of TA proteins in the cytosol. This complex then targets to the endoplasmic reticulum by membrane-bound receptors GET1/WRB and CAMLG/GET2, where the tail-anchored protein is released for insertion. This process is regulated by ATP binding and hydrolysis. ATP binding drives the homodimer towards the closed dimer state, facilitating recognition of newly synthesized TA membrane proteins. ATP hydrolysis is required for insertion. Subsequently, the homodimer reverts towards the open dimer state, lowering its affinity for the GET1-CAMLG receptor, and returning it to the cytosol to initiate a new round of targeting.</text>
</comment>
<comment type="catalytic activity">
    <reaction evidence="1">
        <text>ATP + H2O = ADP + phosphate + H(+)</text>
        <dbReference type="Rhea" id="RHEA:13065"/>
        <dbReference type="ChEBI" id="CHEBI:15377"/>
        <dbReference type="ChEBI" id="CHEBI:15378"/>
        <dbReference type="ChEBI" id="CHEBI:30616"/>
        <dbReference type="ChEBI" id="CHEBI:43474"/>
        <dbReference type="ChEBI" id="CHEBI:456216"/>
    </reaction>
</comment>
<comment type="subunit">
    <text evidence="2 5">Homodimer. Component of the Golgi to ER traffic (GET) complex, which is composed of GET1/WRB, CAMLG/GET2 and GET3/TRC40. Within the complex, CAMLG and GET1 form a heterotetramer which is stabilized by phosphatidylinositol binding and which binds to the GET3 homodimer. Interacts with GET4 (PubMed:34887561).</text>
</comment>
<comment type="subcellular location">
    <subcellularLocation>
        <location evidence="1 2">Cytoplasm</location>
    </subcellularLocation>
    <subcellularLocation>
        <location evidence="1 2">Endoplasmic reticulum</location>
    </subcellularLocation>
    <subcellularLocation>
        <location evidence="1">Nucleus</location>
        <location evidence="1">Nucleolus</location>
    </subcellularLocation>
</comment>
<comment type="disruption phenotype">
    <text evidence="4">GET3-deficient embryos have impaired swim bladder inflation and reduced body size. From day 5 post-fertilization, the mutants display abnormal cardiac contractions and decreased blood flow velocity in the dorsal aorta and cardinal vein. Mutant hearts also have irregular shape and thin walls.</text>
</comment>
<comment type="similarity">
    <text evidence="2">Belongs to the arsA ATPase family.</text>
</comment>
<dbReference type="EC" id="3.6.4.-" evidence="1"/>
<dbReference type="EMBL" id="BC071461">
    <property type="protein sequence ID" value="AAH71461.1"/>
    <property type="molecule type" value="mRNA"/>
</dbReference>
<dbReference type="EMBL" id="BX901942">
    <property type="protein sequence ID" value="CAX14558.1"/>
    <property type="molecule type" value="Genomic_DNA"/>
</dbReference>
<dbReference type="RefSeq" id="NP_001002298.1">
    <property type="nucleotide sequence ID" value="NM_001002298.2"/>
</dbReference>
<dbReference type="PDB" id="7RU9">
    <property type="method" value="EM"/>
    <property type="resolution" value="3.30 A"/>
    <property type="chains" value="A/B=1-341"/>
</dbReference>
<dbReference type="PDB" id="7RUA">
    <property type="method" value="EM"/>
    <property type="resolution" value="3.40 A"/>
    <property type="chains" value="A/B=1-341"/>
</dbReference>
<dbReference type="PDB" id="7RUC">
    <property type="method" value="EM"/>
    <property type="resolution" value="3.60 A"/>
    <property type="chains" value="A/B=1-341"/>
</dbReference>
<dbReference type="PDBsum" id="7RU9"/>
<dbReference type="PDBsum" id="7RUA"/>
<dbReference type="PDBsum" id="7RUC"/>
<dbReference type="EMDB" id="EMD-24700"/>
<dbReference type="EMDB" id="EMD-24701"/>
<dbReference type="EMDB" id="EMD-24702"/>
<dbReference type="SMR" id="Q6IQE5"/>
<dbReference type="BioGRID" id="83620">
    <property type="interactions" value="1"/>
</dbReference>
<dbReference type="FunCoup" id="Q6IQE5">
    <property type="interactions" value="2741"/>
</dbReference>
<dbReference type="STRING" id="7955.ENSDARP00000018158"/>
<dbReference type="iPTMnet" id="Q6IQE5"/>
<dbReference type="PaxDb" id="7955-ENSDARP00000018158"/>
<dbReference type="DNASU" id="325704"/>
<dbReference type="Ensembl" id="ENSDART00000007079">
    <property type="protein sequence ID" value="ENSDARP00000018158"/>
    <property type="gene ID" value="ENSDARG00000018190"/>
</dbReference>
<dbReference type="GeneID" id="325704"/>
<dbReference type="KEGG" id="dre:325704"/>
<dbReference type="AGR" id="ZFIN:ZDB-GENE-040625-120"/>
<dbReference type="CTD" id="439"/>
<dbReference type="ZFIN" id="ZDB-GENE-040625-120">
    <property type="gene designation" value="get3"/>
</dbReference>
<dbReference type="eggNOG" id="KOG2825">
    <property type="taxonomic scope" value="Eukaryota"/>
</dbReference>
<dbReference type="HOGENOM" id="CLU_040761_0_0_1"/>
<dbReference type="InParanoid" id="Q6IQE5"/>
<dbReference type="OMA" id="MDAPYEF"/>
<dbReference type="OrthoDB" id="1770at2759"/>
<dbReference type="PhylomeDB" id="Q6IQE5"/>
<dbReference type="TreeFam" id="TF300670"/>
<dbReference type="PRO" id="PR:Q6IQE5"/>
<dbReference type="Proteomes" id="UP000000437">
    <property type="component" value="Chromosome 1"/>
</dbReference>
<dbReference type="Bgee" id="ENSDARG00000018190">
    <property type="expression patterns" value="Expressed in swim bladder and 29 other cell types or tissues"/>
</dbReference>
<dbReference type="ExpressionAtlas" id="Q6IQE5">
    <property type="expression patterns" value="baseline and differential"/>
</dbReference>
<dbReference type="GO" id="GO:0043529">
    <property type="term" value="C:GET complex"/>
    <property type="evidence" value="ECO:0000318"/>
    <property type="project" value="GO_Central"/>
</dbReference>
<dbReference type="GO" id="GO:0005730">
    <property type="term" value="C:nucleolus"/>
    <property type="evidence" value="ECO:0007669"/>
    <property type="project" value="UniProtKB-SubCell"/>
</dbReference>
<dbReference type="GO" id="GO:0005524">
    <property type="term" value="F:ATP binding"/>
    <property type="evidence" value="ECO:0007669"/>
    <property type="project" value="UniProtKB-UniRule"/>
</dbReference>
<dbReference type="GO" id="GO:0016887">
    <property type="term" value="F:ATP hydrolysis activity"/>
    <property type="evidence" value="ECO:0000318"/>
    <property type="project" value="GO_Central"/>
</dbReference>
<dbReference type="GO" id="GO:0046872">
    <property type="term" value="F:metal ion binding"/>
    <property type="evidence" value="ECO:0007669"/>
    <property type="project" value="UniProtKB-KW"/>
</dbReference>
<dbReference type="GO" id="GO:0006620">
    <property type="term" value="P:post-translational protein targeting to endoplasmic reticulum membrane"/>
    <property type="evidence" value="ECO:0000314"/>
    <property type="project" value="MGI"/>
</dbReference>
<dbReference type="GO" id="GO:0007416">
    <property type="term" value="P:synapse assembly"/>
    <property type="evidence" value="ECO:0000315"/>
    <property type="project" value="ZFIN"/>
</dbReference>
<dbReference type="GO" id="GO:0071816">
    <property type="term" value="P:tail-anchored membrane protein insertion into ER membrane"/>
    <property type="evidence" value="ECO:0000318"/>
    <property type="project" value="GO_Central"/>
</dbReference>
<dbReference type="CDD" id="cd02035">
    <property type="entry name" value="ArsA"/>
    <property type="match status" value="1"/>
</dbReference>
<dbReference type="FunFam" id="3.40.50.300:FF:000235">
    <property type="entry name" value="ATPase ASNA1"/>
    <property type="match status" value="1"/>
</dbReference>
<dbReference type="Gene3D" id="3.40.50.300">
    <property type="entry name" value="P-loop containing nucleotide triphosphate hydrolases"/>
    <property type="match status" value="1"/>
</dbReference>
<dbReference type="HAMAP" id="MF_03112">
    <property type="entry name" value="Asna1_Get3"/>
    <property type="match status" value="1"/>
</dbReference>
<dbReference type="InterPro" id="IPR025723">
    <property type="entry name" value="Anion-transp_ATPase-like_dom"/>
</dbReference>
<dbReference type="InterPro" id="IPR016300">
    <property type="entry name" value="ATPase_ArsA/GET3"/>
</dbReference>
<dbReference type="InterPro" id="IPR027542">
    <property type="entry name" value="ATPase_ArsA/GET3_euk"/>
</dbReference>
<dbReference type="InterPro" id="IPR027417">
    <property type="entry name" value="P-loop_NTPase"/>
</dbReference>
<dbReference type="NCBIfam" id="TIGR00345">
    <property type="entry name" value="GET3_arsA_TRC40"/>
    <property type="match status" value="1"/>
</dbReference>
<dbReference type="PANTHER" id="PTHR10803">
    <property type="entry name" value="ARSENICAL PUMP-DRIVING ATPASE ARSENITE-TRANSLOCATING ATPASE"/>
    <property type="match status" value="1"/>
</dbReference>
<dbReference type="PANTHER" id="PTHR10803:SF3">
    <property type="entry name" value="ATPASE GET3"/>
    <property type="match status" value="1"/>
</dbReference>
<dbReference type="Pfam" id="PF02374">
    <property type="entry name" value="ArsA_ATPase"/>
    <property type="match status" value="1"/>
</dbReference>
<dbReference type="SUPFAM" id="SSF52540">
    <property type="entry name" value="P-loop containing nucleoside triphosphate hydrolases"/>
    <property type="match status" value="1"/>
</dbReference>
<accession>Q6IQE5</accession>
<accession>B8A663</accession>